<gene>
    <name evidence="1" type="primary">pup1</name>
    <name type="ORF">ORF7-1</name>
</gene>
<protein>
    <recommendedName>
        <fullName evidence="1">Prokaryotic ubiquitin-like protein Pup 1</fullName>
    </recommendedName>
    <alternativeName>
        <fullName evidence="1">Bacterial ubiquitin-like modifier 1</fullName>
    </alternativeName>
</protein>
<comment type="function">
    <text evidence="1">Protein modifier that is covalently attached to lysine residues of substrate proteins, thereby targeting them for proteasomal degradation. The tagging system is termed pupylation.</text>
</comment>
<comment type="pathway">
    <text evidence="1">Protein degradation; proteasomal Pup-dependent pathway.</text>
</comment>
<comment type="subunit">
    <text evidence="1">Strongly interacts with the proteasome-associated ATPase ARC through a hydrophobic interface; the interacting region of Pup lies in its C-terminal half. There is one Pup binding site per ARC hexamer ring.</text>
</comment>
<comment type="domain">
    <text evidence="1">The N-terminal unstructured half of Pup provides a signal required to initiate unfolding and degradation by the proteasome but is not needed for pupylation, while the C-terminal helical half of Pup interacts with ARC to target proteins to the proteasome.</text>
</comment>
<comment type="PTM">
    <text evidence="1">Is modified by deamidation of its C-terminal glutamine to glutamate by the deamidase Dop, a prerequisite to the subsequent pupylation process.</text>
</comment>
<comment type="similarity">
    <text evidence="1">Belongs to the prokaryotic ubiquitin-like protein family.</text>
</comment>
<dbReference type="EMBL" id="U26421">
    <property type="protein sequence ID" value="AAC45739.1"/>
    <property type="molecule type" value="Genomic_DNA"/>
</dbReference>
<dbReference type="RefSeq" id="WP_005242990.1">
    <property type="nucleotide sequence ID" value="NZ_JABBPH010000001.1"/>
</dbReference>
<dbReference type="SMR" id="Q53078"/>
<dbReference type="UniPathway" id="UPA00997"/>
<dbReference type="GO" id="GO:0070628">
    <property type="term" value="F:proteasome binding"/>
    <property type="evidence" value="ECO:0007669"/>
    <property type="project" value="UniProtKB-UniRule"/>
</dbReference>
<dbReference type="GO" id="GO:0031386">
    <property type="term" value="F:protein tag activity"/>
    <property type="evidence" value="ECO:0007669"/>
    <property type="project" value="UniProtKB-UniRule"/>
</dbReference>
<dbReference type="GO" id="GO:0019941">
    <property type="term" value="P:modification-dependent protein catabolic process"/>
    <property type="evidence" value="ECO:0007669"/>
    <property type="project" value="UniProtKB-UniRule"/>
</dbReference>
<dbReference type="GO" id="GO:0010498">
    <property type="term" value="P:proteasomal protein catabolic process"/>
    <property type="evidence" value="ECO:0007669"/>
    <property type="project" value="UniProtKB-UniRule"/>
</dbReference>
<dbReference type="GO" id="GO:0070490">
    <property type="term" value="P:protein pupylation"/>
    <property type="evidence" value="ECO:0007669"/>
    <property type="project" value="UniProtKB-UniRule"/>
</dbReference>
<dbReference type="HAMAP" id="MF_02106">
    <property type="entry name" value="Pup"/>
    <property type="match status" value="1"/>
</dbReference>
<dbReference type="InterPro" id="IPR008515">
    <property type="entry name" value="Ubiquitin-like_Pup"/>
</dbReference>
<dbReference type="NCBIfam" id="TIGR03687">
    <property type="entry name" value="pupylate_cterm"/>
    <property type="match status" value="1"/>
</dbReference>
<dbReference type="Pfam" id="PF05639">
    <property type="entry name" value="Pup"/>
    <property type="match status" value="1"/>
</dbReference>
<feature type="chain" id="PRO_0000390604" description="Prokaryotic ubiquitin-like protein Pup 1">
    <location>
        <begin position="1"/>
        <end position="64"/>
    </location>
</feature>
<feature type="region of interest" description="Disordered" evidence="2">
    <location>
        <begin position="1"/>
        <end position="38"/>
    </location>
</feature>
<feature type="region of interest" description="ARC ATPase binding" evidence="1">
    <location>
        <begin position="21"/>
        <end position="58"/>
    </location>
</feature>
<feature type="coiled-coil region" evidence="1">
    <location>
        <begin position="24"/>
        <end position="52"/>
    </location>
</feature>
<feature type="compositionally biased region" description="Basic and acidic residues" evidence="2">
    <location>
        <begin position="1"/>
        <end position="11"/>
    </location>
</feature>
<feature type="modified residue" description="Deamidated glutamine" evidence="1">
    <location>
        <position position="64"/>
    </location>
</feature>
<feature type="cross-link" description="Isoglutamyl lysine isopeptide (Gln-Lys) (interchain with K-? in acceptor proteins)" evidence="1">
    <location>
        <position position="64"/>
    </location>
</feature>
<accession>Q53078</accession>
<evidence type="ECO:0000255" key="1">
    <source>
        <dbReference type="HAMAP-Rule" id="MF_02106"/>
    </source>
</evidence>
<evidence type="ECO:0000256" key="2">
    <source>
        <dbReference type="SAM" id="MobiDB-lite"/>
    </source>
</evidence>
<sequence length="64" mass="6956">MAQEQTKRTGGGDEDDTPGGDGAAGQERREKLAEDTDDLLDEIDDVLEENAEDFVRAYVQKGGQ</sequence>
<keyword id="KW-0175">Coiled coil</keyword>
<keyword id="KW-1017">Isopeptide bond</keyword>
<keyword id="KW-0833">Ubl conjugation pathway</keyword>
<name>PUP1_RHOER</name>
<proteinExistence type="inferred from homology"/>
<organism>
    <name type="scientific">Rhodococcus erythropolis</name>
    <name type="common">Arthrobacter picolinophilus</name>
    <dbReference type="NCBI Taxonomy" id="1833"/>
    <lineage>
        <taxon>Bacteria</taxon>
        <taxon>Bacillati</taxon>
        <taxon>Actinomycetota</taxon>
        <taxon>Actinomycetes</taxon>
        <taxon>Mycobacteriales</taxon>
        <taxon>Nocardiaceae</taxon>
        <taxon>Rhodococcus</taxon>
        <taxon>Rhodococcus erythropolis group</taxon>
    </lineage>
</organism>
<reference key="1">
    <citation type="journal article" date="1995" name="Curr. Biol.">
        <title>The first characterization of a eubacterial proteasome: the 20S complex of Rhodococcus.</title>
        <authorList>
            <person name="Tamura T."/>
            <person name="Nagy I."/>
            <person name="Lupas A."/>
            <person name="Lottspeich F."/>
            <person name="Cejka Z."/>
            <person name="Schoofs G."/>
            <person name="Tanaka K."/>
            <person name="de Mot R."/>
            <person name="Baumeister W."/>
        </authorList>
    </citation>
    <scope>NUCLEOTIDE SEQUENCE [GENOMIC DNA]</scope>
    <source>
        <strain>NI86/21</strain>
    </source>
</reference>